<organism>
    <name type="scientific">Salmonella arizonae (strain ATCC BAA-731 / CDC346-86 / RSK2980)</name>
    <dbReference type="NCBI Taxonomy" id="41514"/>
    <lineage>
        <taxon>Bacteria</taxon>
        <taxon>Pseudomonadati</taxon>
        <taxon>Pseudomonadota</taxon>
        <taxon>Gammaproteobacteria</taxon>
        <taxon>Enterobacterales</taxon>
        <taxon>Enterobacteriaceae</taxon>
        <taxon>Salmonella</taxon>
    </lineage>
</organism>
<dbReference type="EC" id="2.1.1.61" evidence="1"/>
<dbReference type="EC" id="1.5.-.-" evidence="1"/>
<dbReference type="EMBL" id="CP000880">
    <property type="protein sequence ID" value="ABX20447.1"/>
    <property type="molecule type" value="Genomic_DNA"/>
</dbReference>
<dbReference type="SMR" id="A9MJ47"/>
<dbReference type="STRING" id="41514.SARI_00521"/>
<dbReference type="KEGG" id="ses:SARI_00521"/>
<dbReference type="HOGENOM" id="CLU_022427_1_0_6"/>
<dbReference type="Proteomes" id="UP000002084">
    <property type="component" value="Chromosome"/>
</dbReference>
<dbReference type="GO" id="GO:0005737">
    <property type="term" value="C:cytoplasm"/>
    <property type="evidence" value="ECO:0007669"/>
    <property type="project" value="UniProtKB-SubCell"/>
</dbReference>
<dbReference type="GO" id="GO:0050660">
    <property type="term" value="F:flavin adenine dinucleotide binding"/>
    <property type="evidence" value="ECO:0007669"/>
    <property type="project" value="UniProtKB-UniRule"/>
</dbReference>
<dbReference type="GO" id="GO:0016645">
    <property type="term" value="F:oxidoreductase activity, acting on the CH-NH group of donors"/>
    <property type="evidence" value="ECO:0007669"/>
    <property type="project" value="InterPro"/>
</dbReference>
<dbReference type="GO" id="GO:0004808">
    <property type="term" value="F:tRNA (5-methylaminomethyl-2-thiouridylate)(34)-methyltransferase activity"/>
    <property type="evidence" value="ECO:0007669"/>
    <property type="project" value="UniProtKB-EC"/>
</dbReference>
<dbReference type="GO" id="GO:0032259">
    <property type="term" value="P:methylation"/>
    <property type="evidence" value="ECO:0007669"/>
    <property type="project" value="UniProtKB-KW"/>
</dbReference>
<dbReference type="GO" id="GO:0002098">
    <property type="term" value="P:tRNA wobble uridine modification"/>
    <property type="evidence" value="ECO:0007669"/>
    <property type="project" value="TreeGrafter"/>
</dbReference>
<dbReference type="FunFam" id="3.40.50.150:FF:000107">
    <property type="entry name" value="tRNA 5-methylaminomethyl-2-thiouridine biosynthesis bifunctional protein MnmC"/>
    <property type="match status" value="1"/>
</dbReference>
<dbReference type="Gene3D" id="3.30.9.10">
    <property type="entry name" value="D-Amino Acid Oxidase, subunit A, domain 2"/>
    <property type="match status" value="1"/>
</dbReference>
<dbReference type="Gene3D" id="3.50.50.60">
    <property type="entry name" value="FAD/NAD(P)-binding domain"/>
    <property type="match status" value="1"/>
</dbReference>
<dbReference type="Gene3D" id="3.40.50.150">
    <property type="entry name" value="Vaccinia Virus protein VP39"/>
    <property type="match status" value="1"/>
</dbReference>
<dbReference type="HAMAP" id="MF_01102">
    <property type="entry name" value="MnmC"/>
    <property type="match status" value="1"/>
</dbReference>
<dbReference type="InterPro" id="IPR006076">
    <property type="entry name" value="FAD-dep_OxRdtase"/>
</dbReference>
<dbReference type="InterPro" id="IPR036188">
    <property type="entry name" value="FAD/NAD-bd_sf"/>
</dbReference>
<dbReference type="InterPro" id="IPR008471">
    <property type="entry name" value="MnmC-like_methylTransf"/>
</dbReference>
<dbReference type="InterPro" id="IPR029063">
    <property type="entry name" value="SAM-dependent_MTases_sf"/>
</dbReference>
<dbReference type="InterPro" id="IPR023032">
    <property type="entry name" value="tRNA_MAMT_biosynth_bifunc_MnmC"/>
</dbReference>
<dbReference type="InterPro" id="IPR047785">
    <property type="entry name" value="tRNA_MNMC2"/>
</dbReference>
<dbReference type="InterPro" id="IPR017610">
    <property type="entry name" value="tRNA_S-uridine_synth_MnmC_C"/>
</dbReference>
<dbReference type="NCBIfam" id="TIGR03197">
    <property type="entry name" value="MnmC_Cterm"/>
    <property type="match status" value="1"/>
</dbReference>
<dbReference type="NCBIfam" id="NF002480">
    <property type="entry name" value="PRK01747.1-1"/>
    <property type="match status" value="1"/>
</dbReference>
<dbReference type="NCBIfam" id="NF002481">
    <property type="entry name" value="PRK01747.1-2"/>
    <property type="match status" value="1"/>
</dbReference>
<dbReference type="NCBIfam" id="NF002482">
    <property type="entry name" value="PRK01747.1-3"/>
    <property type="match status" value="1"/>
</dbReference>
<dbReference type="NCBIfam" id="NF002484">
    <property type="entry name" value="PRK01747.1-5"/>
    <property type="match status" value="1"/>
</dbReference>
<dbReference type="NCBIfam" id="NF033855">
    <property type="entry name" value="tRNA_MNMC2"/>
    <property type="match status" value="1"/>
</dbReference>
<dbReference type="PANTHER" id="PTHR13847">
    <property type="entry name" value="SARCOSINE DEHYDROGENASE-RELATED"/>
    <property type="match status" value="1"/>
</dbReference>
<dbReference type="PANTHER" id="PTHR13847:SF283">
    <property type="entry name" value="TRNA 5-METHYLAMINOMETHYL-2-THIOURIDINE BIOSYNTHESIS BIFUNCTIONAL PROTEIN MNMC"/>
    <property type="match status" value="1"/>
</dbReference>
<dbReference type="Pfam" id="PF01266">
    <property type="entry name" value="DAO"/>
    <property type="match status" value="1"/>
</dbReference>
<dbReference type="Pfam" id="PF05430">
    <property type="entry name" value="Methyltransf_30"/>
    <property type="match status" value="1"/>
</dbReference>
<dbReference type="SUPFAM" id="SSF51905">
    <property type="entry name" value="FAD/NAD(P)-binding domain"/>
    <property type="match status" value="1"/>
</dbReference>
<accession>A9MJ47</accession>
<proteinExistence type="inferred from homology"/>
<sequence length="666" mass="73780">MKQYAIQPATLEFNAEGTPVSRDFDDVYFSNDNGLEETRYVFLGGNRLAERFPVHSHPLFIVAESGFGTGLNFLTLWQAFNNFRSEHPQATLQRLHFVSFEKFPLTRDDLALTHQHWPELAPWAEQLQAQWPLPLAGCHRLLLDQGRVTLDLWFGDINELTDQLDATLNQKVDAWFLDGFAPAKNPDMWTPNLFNTMARLARPGATLATFTSAGFVRRGLQEAGFTMQKRKGFGRKREMLCGVMERCLTPTISAPWFYRSGSEKRETAIIGGGIASALLSLALLRRGWQVTLYCADDKPARGASGNQQGALYPLLSKHDAAINRFFPTAFTFARRLYDALPVSFDHDWCGVTQLGWDEKSQQKIARMLSLALPAGLASALNAEETTQAVGVTTRCGGITYPAGGWLCPEQLTRAVIALATEQGLQTRFRHTLTSLAAQKSQWQLRFASGEAASHDTVVLANGHQINRFDQTQPLPVYAVGGQVSHIPTTPALSALRQVLCYDGYLTPQNPNNRQHCIGASYHRGNESTVWREEDQRQNRQRLLDCFPDADWAKEVDVSDNSARCGVRCATRDHLPMVGNVPDYHATLTHYADLADNKASAVPAPVYPGLFMLGALGSRGLCSAPLCAEILAAQMSNEPIPLDASTLAALNPNRLWVRKLLKGKAVK</sequence>
<reference key="1">
    <citation type="submission" date="2007-11" db="EMBL/GenBank/DDBJ databases">
        <authorList>
            <consortium name="The Salmonella enterica serovar Arizonae Genome Sequencing Project"/>
            <person name="McClelland M."/>
            <person name="Sanderson E.K."/>
            <person name="Porwollik S."/>
            <person name="Spieth J."/>
            <person name="Clifton W.S."/>
            <person name="Fulton R."/>
            <person name="Chunyan W."/>
            <person name="Wollam A."/>
            <person name="Shah N."/>
            <person name="Pepin K."/>
            <person name="Bhonagiri V."/>
            <person name="Nash W."/>
            <person name="Johnson M."/>
            <person name="Thiruvilangam P."/>
            <person name="Wilson R."/>
        </authorList>
    </citation>
    <scope>NUCLEOTIDE SEQUENCE [LARGE SCALE GENOMIC DNA]</scope>
    <source>
        <strain>ATCC BAA-731 / CDC346-86 / RSK2980</strain>
    </source>
</reference>
<comment type="function">
    <text evidence="1">Catalyzes the last two steps in the biosynthesis of 5-methylaminomethyl-2-thiouridine (mnm(5)s(2)U) at the wobble position (U34) in tRNA. Catalyzes the FAD-dependent demodification of cmnm(5)s(2)U34 to nm(5)s(2)U34, followed by the transfer of a methyl group from S-adenosyl-L-methionine to nm(5)s(2)U34, to form mnm(5)s(2)U34.</text>
</comment>
<comment type="catalytic activity">
    <reaction evidence="1">
        <text>5-aminomethyl-2-thiouridine(34) in tRNA + S-adenosyl-L-methionine = 5-methylaminomethyl-2-thiouridine(34) in tRNA + S-adenosyl-L-homocysteine + H(+)</text>
        <dbReference type="Rhea" id="RHEA:19569"/>
        <dbReference type="Rhea" id="RHEA-COMP:10195"/>
        <dbReference type="Rhea" id="RHEA-COMP:10197"/>
        <dbReference type="ChEBI" id="CHEBI:15378"/>
        <dbReference type="ChEBI" id="CHEBI:57856"/>
        <dbReference type="ChEBI" id="CHEBI:59789"/>
        <dbReference type="ChEBI" id="CHEBI:74454"/>
        <dbReference type="ChEBI" id="CHEBI:74455"/>
        <dbReference type="EC" id="2.1.1.61"/>
    </reaction>
</comment>
<comment type="cofactor">
    <cofactor evidence="1">
        <name>FAD</name>
        <dbReference type="ChEBI" id="CHEBI:57692"/>
    </cofactor>
</comment>
<comment type="subcellular location">
    <subcellularLocation>
        <location evidence="1">Cytoplasm</location>
    </subcellularLocation>
</comment>
<comment type="similarity">
    <text evidence="1">In the N-terminal section; belongs to the methyltransferase superfamily. tRNA (mnm(5)s(2)U34)-methyltransferase family.</text>
</comment>
<comment type="similarity">
    <text evidence="1">In the C-terminal section; belongs to the DAO family.</text>
</comment>
<protein>
    <recommendedName>
        <fullName evidence="1">tRNA 5-methylaminomethyl-2-thiouridine biosynthesis bifunctional protein MnmC</fullName>
        <shortName evidence="1">tRNA mnm(5)s(2)U biosynthesis bifunctional protein</shortName>
    </recommendedName>
    <domain>
        <recommendedName>
            <fullName evidence="1">tRNA (mnm(5)s(2)U34)-methyltransferase</fullName>
            <ecNumber evidence="1">2.1.1.61</ecNumber>
        </recommendedName>
    </domain>
    <domain>
        <recommendedName>
            <fullName evidence="1">FAD-dependent cmnm(5)s(2)U34 oxidoreductase</fullName>
            <ecNumber evidence="1">1.5.-.-</ecNumber>
        </recommendedName>
    </domain>
</protein>
<feature type="chain" id="PRO_1000084795" description="tRNA 5-methylaminomethyl-2-thiouridine biosynthesis bifunctional protein MnmC">
    <location>
        <begin position="1"/>
        <end position="666"/>
    </location>
</feature>
<feature type="region of interest" description="tRNA (mnm(5)s(2)U34)-methyltransferase">
    <location>
        <begin position="1"/>
        <end position="245"/>
    </location>
</feature>
<feature type="region of interest" description="FAD-dependent cmnm(5)s(2)U34 oxidoreductase">
    <location>
        <begin position="270"/>
        <end position="666"/>
    </location>
</feature>
<name>MNMC_SALAR</name>
<evidence type="ECO:0000255" key="1">
    <source>
        <dbReference type="HAMAP-Rule" id="MF_01102"/>
    </source>
</evidence>
<gene>
    <name evidence="1" type="primary">mnmC</name>
    <name type="ordered locus">SARI_00521</name>
</gene>
<keyword id="KW-0963">Cytoplasm</keyword>
<keyword id="KW-0274">FAD</keyword>
<keyword id="KW-0285">Flavoprotein</keyword>
<keyword id="KW-0489">Methyltransferase</keyword>
<keyword id="KW-0511">Multifunctional enzyme</keyword>
<keyword id="KW-0560">Oxidoreductase</keyword>
<keyword id="KW-1185">Reference proteome</keyword>
<keyword id="KW-0949">S-adenosyl-L-methionine</keyword>
<keyword id="KW-0808">Transferase</keyword>
<keyword id="KW-0819">tRNA processing</keyword>